<organism>
    <name type="scientific">Synechococcus sp. (strain WH7803)</name>
    <dbReference type="NCBI Taxonomy" id="32051"/>
    <lineage>
        <taxon>Bacteria</taxon>
        <taxon>Bacillati</taxon>
        <taxon>Cyanobacteriota</taxon>
        <taxon>Cyanophyceae</taxon>
        <taxon>Synechococcales</taxon>
        <taxon>Synechococcaceae</taxon>
        <taxon>Synechococcus</taxon>
    </lineage>
</organism>
<sequence length="124" mass="13784">MPTIQQLIRTERQSSKAKTKSPALKSCPERRGVCTRVYTSTPKKPNSALRKVARVRLTSGFEVTAYIGGIGHNLQEHSVVLIRGGRVKDLPGVRYHIIRGTLDTAGVKDRRQSRSKYGAKTPKE</sequence>
<keyword id="KW-0488">Methylation</keyword>
<keyword id="KW-1185">Reference proteome</keyword>
<keyword id="KW-0687">Ribonucleoprotein</keyword>
<keyword id="KW-0689">Ribosomal protein</keyword>
<keyword id="KW-0694">RNA-binding</keyword>
<keyword id="KW-0699">rRNA-binding</keyword>
<keyword id="KW-0820">tRNA-binding</keyword>
<comment type="function">
    <text evidence="2">With S4 and S5 plays an important role in translational accuracy.</text>
</comment>
<comment type="function">
    <text evidence="2">Interacts with and stabilizes bases of the 16S rRNA that are involved in tRNA selection in the A site and with the mRNA backbone. Located at the interface of the 30S and 50S subunits, it traverses the body of the 30S subunit contacting proteins on the other side and probably holding the rRNA structure together. The combined cluster of proteins S8, S12 and S17 appears to hold together the shoulder and platform of the 30S subunit.</text>
</comment>
<comment type="subunit">
    <text evidence="2">Part of the 30S ribosomal subunit. Contacts proteins S8 and S17. May interact with IF1 in the 30S initiation complex.</text>
</comment>
<comment type="similarity">
    <text evidence="2">Belongs to the universal ribosomal protein uS12 family.</text>
</comment>
<reference key="1">
    <citation type="submission" date="2006-05" db="EMBL/GenBank/DDBJ databases">
        <authorList>
            <consortium name="Genoscope"/>
        </authorList>
    </citation>
    <scope>NUCLEOTIDE SEQUENCE [LARGE SCALE GENOMIC DNA]</scope>
    <source>
        <strain>WH7803</strain>
    </source>
</reference>
<feature type="chain" id="PRO_0000296039" description="Small ribosomal subunit protein uS12">
    <location>
        <begin position="1"/>
        <end position="124"/>
    </location>
</feature>
<feature type="region of interest" description="Disordered" evidence="3">
    <location>
        <begin position="1"/>
        <end position="28"/>
    </location>
</feature>
<feature type="region of interest" description="Disordered" evidence="3">
    <location>
        <begin position="104"/>
        <end position="124"/>
    </location>
</feature>
<feature type="modified residue" description="3-methylthioaspartic acid" evidence="1">
    <location>
        <position position="89"/>
    </location>
</feature>
<accession>A5GIP3</accession>
<dbReference type="EMBL" id="CT971583">
    <property type="protein sequence ID" value="CAK22808.1"/>
    <property type="molecule type" value="Genomic_DNA"/>
</dbReference>
<dbReference type="SMR" id="A5GIP3"/>
<dbReference type="STRING" id="32051.SynWH7803_0382"/>
<dbReference type="KEGG" id="syx:SynWH7803_0382"/>
<dbReference type="eggNOG" id="COG0048">
    <property type="taxonomic scope" value="Bacteria"/>
</dbReference>
<dbReference type="HOGENOM" id="CLU_104295_1_2_3"/>
<dbReference type="OrthoDB" id="9802366at2"/>
<dbReference type="Proteomes" id="UP000001566">
    <property type="component" value="Chromosome"/>
</dbReference>
<dbReference type="GO" id="GO:0015935">
    <property type="term" value="C:small ribosomal subunit"/>
    <property type="evidence" value="ECO:0007669"/>
    <property type="project" value="InterPro"/>
</dbReference>
<dbReference type="GO" id="GO:0019843">
    <property type="term" value="F:rRNA binding"/>
    <property type="evidence" value="ECO:0007669"/>
    <property type="project" value="UniProtKB-UniRule"/>
</dbReference>
<dbReference type="GO" id="GO:0003735">
    <property type="term" value="F:structural constituent of ribosome"/>
    <property type="evidence" value="ECO:0007669"/>
    <property type="project" value="InterPro"/>
</dbReference>
<dbReference type="GO" id="GO:0000049">
    <property type="term" value="F:tRNA binding"/>
    <property type="evidence" value="ECO:0007669"/>
    <property type="project" value="UniProtKB-UniRule"/>
</dbReference>
<dbReference type="GO" id="GO:0006412">
    <property type="term" value="P:translation"/>
    <property type="evidence" value="ECO:0007669"/>
    <property type="project" value="UniProtKB-UniRule"/>
</dbReference>
<dbReference type="CDD" id="cd03368">
    <property type="entry name" value="Ribosomal_S12"/>
    <property type="match status" value="1"/>
</dbReference>
<dbReference type="FunFam" id="2.40.50.140:FF:000001">
    <property type="entry name" value="30S ribosomal protein S12"/>
    <property type="match status" value="1"/>
</dbReference>
<dbReference type="Gene3D" id="2.40.50.140">
    <property type="entry name" value="Nucleic acid-binding proteins"/>
    <property type="match status" value="1"/>
</dbReference>
<dbReference type="HAMAP" id="MF_00403_B">
    <property type="entry name" value="Ribosomal_uS12_B"/>
    <property type="match status" value="1"/>
</dbReference>
<dbReference type="InterPro" id="IPR012340">
    <property type="entry name" value="NA-bd_OB-fold"/>
</dbReference>
<dbReference type="InterPro" id="IPR006032">
    <property type="entry name" value="Ribosomal_uS12"/>
</dbReference>
<dbReference type="InterPro" id="IPR005679">
    <property type="entry name" value="Ribosomal_uS12_bac"/>
</dbReference>
<dbReference type="NCBIfam" id="TIGR00981">
    <property type="entry name" value="rpsL_bact"/>
    <property type="match status" value="1"/>
</dbReference>
<dbReference type="PANTHER" id="PTHR11652">
    <property type="entry name" value="30S RIBOSOMAL PROTEIN S12 FAMILY MEMBER"/>
    <property type="match status" value="1"/>
</dbReference>
<dbReference type="Pfam" id="PF00164">
    <property type="entry name" value="Ribosom_S12_S23"/>
    <property type="match status" value="1"/>
</dbReference>
<dbReference type="PIRSF" id="PIRSF002133">
    <property type="entry name" value="Ribosomal_S12/S23"/>
    <property type="match status" value="1"/>
</dbReference>
<dbReference type="PRINTS" id="PR01034">
    <property type="entry name" value="RIBOSOMALS12"/>
</dbReference>
<dbReference type="SUPFAM" id="SSF50249">
    <property type="entry name" value="Nucleic acid-binding proteins"/>
    <property type="match status" value="1"/>
</dbReference>
<dbReference type="PROSITE" id="PS00055">
    <property type="entry name" value="RIBOSOMAL_S12"/>
    <property type="match status" value="1"/>
</dbReference>
<gene>
    <name evidence="2" type="primary">rpsL</name>
    <name evidence="2" type="synonym">rps12</name>
    <name type="ordered locus">SynWH7803_0382</name>
</gene>
<protein>
    <recommendedName>
        <fullName evidence="2">Small ribosomal subunit protein uS12</fullName>
    </recommendedName>
    <alternativeName>
        <fullName evidence="4">30S ribosomal protein S12</fullName>
    </alternativeName>
</protein>
<name>RS12_SYNPW</name>
<evidence type="ECO:0000250" key="1"/>
<evidence type="ECO:0000255" key="2">
    <source>
        <dbReference type="HAMAP-Rule" id="MF_00403"/>
    </source>
</evidence>
<evidence type="ECO:0000256" key="3">
    <source>
        <dbReference type="SAM" id="MobiDB-lite"/>
    </source>
</evidence>
<evidence type="ECO:0000305" key="4"/>
<proteinExistence type="inferred from homology"/>